<evidence type="ECO:0000250" key="1">
    <source>
        <dbReference type="UniProtKB" id="P19517"/>
    </source>
</evidence>
<evidence type="ECO:0000250" key="2">
    <source>
        <dbReference type="UniProtKB" id="Q02641"/>
    </source>
</evidence>
<evidence type="ECO:0000250" key="3">
    <source>
        <dbReference type="UniProtKB" id="Q8R3Z5"/>
    </source>
</evidence>
<evidence type="ECO:0000255" key="4">
    <source>
        <dbReference type="PROSITE-ProRule" id="PRU00192"/>
    </source>
</evidence>
<evidence type="ECO:0000256" key="5">
    <source>
        <dbReference type="SAM" id="MobiDB-lite"/>
    </source>
</evidence>
<evidence type="ECO:0000269" key="6">
    <source>
    </source>
</evidence>
<evidence type="ECO:0000269" key="7">
    <source>
    </source>
</evidence>
<evidence type="ECO:0000269" key="8">
    <source>
    </source>
</evidence>
<evidence type="ECO:0000305" key="9"/>
<evidence type="ECO:0000305" key="10">
    <source>
    </source>
</evidence>
<evidence type="ECO:0007744" key="11">
    <source>
    </source>
</evidence>
<sequence length="597" mass="65680">MVQKSGMSRGPYPPSQEIPMEVFDPSPQGKYSKRKGRFKRSDGSTSSDTTSNSFVRQGSAESYTSRPSDSDVSLEEDREALRKEAERQALAQLEKAKTKPVAFAVRTNVGYNPSPGDEVPVQGVAITFEPKDFLHIKEKYNNDWWIGRLVKEGCEVGFIPSPVKLDSLRLLQEQTLRQNRLSSSKSGDNSSSSLGDVVTGTRRPTPPASAKQKQKSTEHVPPYDVVPSMRPIILVGPSLKGYEVTDMMQKALFDFLKHRFDGRISITRVTADISLAKRSVLNNPSKHIIIERSNTRSSLAEVQSEIERIFELARTLQLVALDADTINHPAQLSKTSLAPIIVYIKITSPKVLQRLIKSRGKSQSKHLNVQIAASEKLAQCPPEMFDIILDENQLEDACEHLAEYLEAYWKATHPPSRTPPNPLLNRTMATAALAVSPAPVSNLQGPYLVSGDQPLDRATGEHASVHEYPGELGQPPGLYPSNHPPGRAGTLWALSRQDTFDADTPGSRNSVYTEPGDSCVDMETDPSEGPGPGDPAGGGTPPARQGSWEEEEDYEEEMTDNRNRGRNKARYCAEGGGPVLGRNKNELEGWGQGVYIR</sequence>
<name>CACB1_RAT</name>
<comment type="function">
    <text evidence="1 2 10">Regulatory subunit of L-type calcium channels. Regulates the activity of L-type calcium channels that contain CACNA1A as pore-forming subunit (By similarity). Regulates the activity of L-type calcium channels that contain CACNA1C as pore-forming subunit and increases the presence of the channel complex at the cell membrane (Probable). Required for functional expression L-type calcium channels that contain CACNA1D as pore-forming subunit. Regulates the activity of L-type calcium channels that contain CACNA1B as pore-forming subunit (By similarity).</text>
</comment>
<comment type="subunit">
    <text evidence="1 2 3 7 8">Regulatory subunit of L-type calcium channels that consist of a pore-forming alpha subunit and auxiliary beta, gamma and delta subunits (PubMed:21127204). Interacts with CACNA1A, CACNA1B, CACNA1C and CACNA1S (By similarity). Component of a calcium channel complex consisting of a pore-forming alpha subunit (CACNA1S) and the ancillary subunits CACNB1 or CACNB2, CACNG1 and CACNA2D1. Identified in a complex with CACNA1C (By similarity). Identified in a complex with the L-type calcium channel subunits CACNA1C, CACNA2D1, CACNB1 and one of the gamma subunits (CACNG4, CACNG6, CACNG7, or CACNG8) (PubMed:21127204). Part of a L-type calcium channel complex that contains CACNA1D, CACNA2D1 and CACNB1. Part of a L-type calcium channel complex that contains CACNA1B, CACNA2D1 and CACNB1 (By similarity). Interacts with JSRP1. Interacts with RYR1 (By similarity). Interacts with CBARP (PubMed:24751537).</text>
</comment>
<comment type="interaction">
    <interactant intactId="EBI-349245">
        <id>P54283</id>
    </interactant>
    <interactant intactId="EBI-349245">
        <id>P54283</id>
        <label>Cacnb1</label>
    </interactant>
    <organismsDiffer>false</organismsDiffer>
    <experiments>2</experiments>
</comment>
<comment type="subcellular location">
    <subcellularLocation>
        <location evidence="1">Cell membrane</location>
        <location evidence="1">Sarcolemma</location>
        <topology evidence="1">Peripheral membrane protein</topology>
        <orientation evidence="1">Cytoplasmic side</orientation>
    </subcellularLocation>
    <subcellularLocation>
        <location evidence="2">Cell membrane</location>
        <topology evidence="1">Peripheral membrane protein</topology>
    </subcellularLocation>
</comment>
<comment type="tissue specificity">
    <text evidence="6">Detected in brain.</text>
</comment>
<comment type="similarity">
    <text evidence="9">Belongs to the calcium channel beta subunit family.</text>
</comment>
<keyword id="KW-0106">Calcium</keyword>
<keyword id="KW-0107">Calcium channel</keyword>
<keyword id="KW-0109">Calcium transport</keyword>
<keyword id="KW-1003">Cell membrane</keyword>
<keyword id="KW-0407">Ion channel</keyword>
<keyword id="KW-0406">Ion transport</keyword>
<keyword id="KW-0472">Membrane</keyword>
<keyword id="KW-0597">Phosphoprotein</keyword>
<keyword id="KW-1185">Reference proteome</keyword>
<keyword id="KW-0728">SH3 domain</keyword>
<keyword id="KW-0813">Transport</keyword>
<keyword id="KW-0851">Voltage-gated channel</keyword>
<feature type="chain" id="PRO_0000144049" description="Voltage-dependent L-type calcium channel subunit beta-1">
    <location>
        <begin position="1"/>
        <end position="597"/>
    </location>
</feature>
<feature type="domain" description="SH3" evidence="4">
    <location>
        <begin position="100"/>
        <end position="169"/>
    </location>
</feature>
<feature type="region of interest" description="Disordered" evidence="5">
    <location>
        <begin position="1"/>
        <end position="79"/>
    </location>
</feature>
<feature type="region of interest" description="Disordered" evidence="5">
    <location>
        <begin position="179"/>
        <end position="223"/>
    </location>
</feature>
<feature type="region of interest" description="Disordered" evidence="5">
    <location>
        <begin position="466"/>
        <end position="597"/>
    </location>
</feature>
<feature type="compositionally biased region" description="Low complexity" evidence="5">
    <location>
        <begin position="43"/>
        <end position="53"/>
    </location>
</feature>
<feature type="compositionally biased region" description="Polar residues" evidence="5">
    <location>
        <begin position="54"/>
        <end position="71"/>
    </location>
</feature>
<feature type="compositionally biased region" description="Low complexity" evidence="5">
    <location>
        <begin position="182"/>
        <end position="193"/>
    </location>
</feature>
<feature type="compositionally biased region" description="Gly residues" evidence="5">
    <location>
        <begin position="530"/>
        <end position="540"/>
    </location>
</feature>
<feature type="compositionally biased region" description="Acidic residues" evidence="5">
    <location>
        <begin position="548"/>
        <end position="558"/>
    </location>
</feature>
<feature type="modified residue" description="Phosphoserine" evidence="11">
    <location>
        <position position="44"/>
    </location>
</feature>
<feature type="modified residue" description="Phosphoserine" evidence="11">
    <location>
        <position position="47"/>
    </location>
</feature>
<feature type="modified residue" description="Phosphoserine" evidence="11">
    <location>
        <position position="73"/>
    </location>
</feature>
<feature type="modified residue" description="Phosphoserine" evidence="11">
    <location>
        <position position="186"/>
    </location>
</feature>
<feature type="modified residue" description="Phosphoserine" evidence="11">
    <location>
        <position position="193"/>
    </location>
</feature>
<feature type="modified residue" description="Phosphothreonine" evidence="3">
    <location>
        <position position="499"/>
    </location>
</feature>
<feature type="modified residue" description="Phosphoserine" evidence="11">
    <location>
        <position position="547"/>
    </location>
</feature>
<gene>
    <name type="primary">Cacnb1</name>
    <name type="synonym">Cacnlb1</name>
</gene>
<reference key="1">
    <citation type="journal article" date="1991" name="FEBS Lett.">
        <title>Cloning and tissue-specific expression of the brain calcium channel beta-subunit.</title>
        <authorList>
            <person name="Pragnell M."/>
            <person name="Sakamoto J."/>
            <person name="Jay S.D."/>
            <person name="Campbell K.P."/>
        </authorList>
    </citation>
    <scope>NUCLEOTIDE SEQUENCE [MRNA]</scope>
    <scope>TISSUE SPECIFICITY</scope>
    <source>
        <tissue>Brain</tissue>
    </source>
</reference>
<reference key="2">
    <citation type="journal article" date="2011" name="FASEB J.">
        <title>Cardiac L-type calcium channel (Cav1.2) associates with gamma subunits.</title>
        <authorList>
            <person name="Yang L."/>
            <person name="Katchman A."/>
            <person name="Morrow J.P."/>
            <person name="Doshi D."/>
            <person name="Marx S.O."/>
        </authorList>
    </citation>
    <scope>FUNCTION</scope>
    <scope>SUBUNIT</scope>
    <scope>SUBCELLULAR LOCATION</scope>
</reference>
<reference key="3">
    <citation type="journal article" date="2012" name="Nat. Commun.">
        <title>Quantitative maps of protein phosphorylation sites across 14 different rat organs and tissues.</title>
        <authorList>
            <person name="Lundby A."/>
            <person name="Secher A."/>
            <person name="Lage K."/>
            <person name="Nordsborg N.B."/>
            <person name="Dmytriyev A."/>
            <person name="Lundby C."/>
            <person name="Olsen J.V."/>
        </authorList>
    </citation>
    <scope>PHOSPHORYLATION [LARGE SCALE ANALYSIS] AT SER-44; SER-47; SER-73; SER-186; SER-193 AND SER-547</scope>
    <scope>IDENTIFICATION BY MASS SPECTROMETRY [LARGE SCALE ANALYSIS]</scope>
</reference>
<reference key="4">
    <citation type="journal article" date="2014" name="J. Cell Biol.">
        <title>BARP suppresses voltage-gated calcium channel activity and Ca2+-evoked exocytosis.</title>
        <authorList>
            <person name="Beguin P."/>
            <person name="Nagashima K."/>
            <person name="Mahalakshmi R.N."/>
            <person name="Vigot R."/>
            <person name="Matsunaga A."/>
            <person name="Miki T."/>
            <person name="Ng M.Y."/>
            <person name="Ng Y.J."/>
            <person name="Lim C.H."/>
            <person name="Tay H.S."/>
            <person name="Hwang L.A."/>
            <person name="Firsov D."/>
            <person name="Tang B.L."/>
            <person name="Inagaki N."/>
            <person name="Mori Y."/>
            <person name="Seino S."/>
            <person name="Launey T."/>
            <person name="Hunziker W."/>
        </authorList>
    </citation>
    <scope>INTERACTION WITH CBARP</scope>
</reference>
<protein>
    <recommendedName>
        <fullName>Voltage-dependent L-type calcium channel subunit beta-1</fullName>
        <shortName>CAB1</shortName>
    </recommendedName>
    <alternativeName>
        <fullName>Calcium channel voltage-dependent subunit beta 1</fullName>
    </alternativeName>
</protein>
<dbReference type="EMBL" id="X61394">
    <property type="protein sequence ID" value="CAA43665.1"/>
    <property type="molecule type" value="mRNA"/>
</dbReference>
<dbReference type="PIR" id="S18304">
    <property type="entry name" value="S18304"/>
</dbReference>
<dbReference type="RefSeq" id="NP_059042.1">
    <property type="nucleotide sequence ID" value="NM_017346.1"/>
</dbReference>
<dbReference type="SMR" id="P54283"/>
<dbReference type="BioGRID" id="248426">
    <property type="interactions" value="4"/>
</dbReference>
<dbReference type="CORUM" id="P54283"/>
<dbReference type="DIP" id="DIP-33255N"/>
<dbReference type="FunCoup" id="P54283">
    <property type="interactions" value="2087"/>
</dbReference>
<dbReference type="IntAct" id="P54283">
    <property type="interactions" value="1"/>
</dbReference>
<dbReference type="STRING" id="10116.ENSRNOP00000073177"/>
<dbReference type="BindingDB" id="P54283"/>
<dbReference type="ChEMBL" id="CHEMBL3885653"/>
<dbReference type="ChEMBL" id="CHEMBL3988639"/>
<dbReference type="GlyGen" id="P54283">
    <property type="glycosylation" value="1 site"/>
</dbReference>
<dbReference type="iPTMnet" id="P54283"/>
<dbReference type="PhosphoSitePlus" id="P54283"/>
<dbReference type="PaxDb" id="10116-ENSRNOP00000006098"/>
<dbReference type="ABCD" id="P54283">
    <property type="antibodies" value="1 sequenced antibody"/>
</dbReference>
<dbReference type="GeneID" id="50688"/>
<dbReference type="KEGG" id="rno:50688"/>
<dbReference type="UCSC" id="RGD:68382">
    <property type="organism name" value="rat"/>
</dbReference>
<dbReference type="AGR" id="RGD:68382"/>
<dbReference type="CTD" id="782"/>
<dbReference type="RGD" id="68382">
    <property type="gene designation" value="Cacnb1"/>
</dbReference>
<dbReference type="eggNOG" id="KOG3812">
    <property type="taxonomic scope" value="Eukaryota"/>
</dbReference>
<dbReference type="InParanoid" id="P54283"/>
<dbReference type="OrthoDB" id="5962384at2759"/>
<dbReference type="Reactome" id="R-RNO-112308">
    <property type="pathway name" value="Presynaptic depolarization and calcium channel opening"/>
</dbReference>
<dbReference type="Reactome" id="R-RNO-5576892">
    <property type="pathway name" value="Phase 0 - rapid depolarisation"/>
</dbReference>
<dbReference type="Reactome" id="R-RNO-5576893">
    <property type="pathway name" value="Phase 2 - plateau phase"/>
</dbReference>
<dbReference type="PRO" id="PR:P54283"/>
<dbReference type="Proteomes" id="UP000002494">
    <property type="component" value="Unplaced"/>
</dbReference>
<dbReference type="GO" id="GO:0098978">
    <property type="term" value="C:glutamatergic synapse"/>
    <property type="evidence" value="ECO:0000314"/>
    <property type="project" value="SynGO"/>
</dbReference>
<dbReference type="GO" id="GO:0098794">
    <property type="term" value="C:postsynapse"/>
    <property type="evidence" value="ECO:0000314"/>
    <property type="project" value="SynGO"/>
</dbReference>
<dbReference type="GO" id="GO:0098793">
    <property type="term" value="C:presynapse"/>
    <property type="evidence" value="ECO:0000266"/>
    <property type="project" value="RGD"/>
</dbReference>
<dbReference type="GO" id="GO:0016529">
    <property type="term" value="C:sarcoplasmic reticulum"/>
    <property type="evidence" value="ECO:0000266"/>
    <property type="project" value="RGD"/>
</dbReference>
<dbReference type="GO" id="GO:0030315">
    <property type="term" value="C:T-tubule"/>
    <property type="evidence" value="ECO:0000266"/>
    <property type="project" value="RGD"/>
</dbReference>
<dbReference type="GO" id="GO:0005891">
    <property type="term" value="C:voltage-gated calcium channel complex"/>
    <property type="evidence" value="ECO:0000314"/>
    <property type="project" value="RGD"/>
</dbReference>
<dbReference type="GO" id="GO:0005246">
    <property type="term" value="F:calcium channel regulator activity"/>
    <property type="evidence" value="ECO:0000266"/>
    <property type="project" value="RGD"/>
</dbReference>
<dbReference type="GO" id="GO:0008331">
    <property type="term" value="F:high voltage-gated calcium channel activity"/>
    <property type="evidence" value="ECO:0000266"/>
    <property type="project" value="RGD"/>
</dbReference>
<dbReference type="GO" id="GO:0042802">
    <property type="term" value="F:identical protein binding"/>
    <property type="evidence" value="ECO:0000353"/>
    <property type="project" value="IntAct"/>
</dbReference>
<dbReference type="GO" id="GO:0051219">
    <property type="term" value="F:phosphoprotein binding"/>
    <property type="evidence" value="ECO:0000353"/>
    <property type="project" value="RGD"/>
</dbReference>
<dbReference type="GO" id="GO:0019904">
    <property type="term" value="F:protein domain specific binding"/>
    <property type="evidence" value="ECO:0000353"/>
    <property type="project" value="RGD"/>
</dbReference>
<dbReference type="GO" id="GO:0019901">
    <property type="term" value="F:protein kinase binding"/>
    <property type="evidence" value="ECO:0000314"/>
    <property type="project" value="RGD"/>
</dbReference>
<dbReference type="GO" id="GO:0005245">
    <property type="term" value="F:voltage-gated calcium channel activity"/>
    <property type="evidence" value="ECO:0000266"/>
    <property type="project" value="RGD"/>
</dbReference>
<dbReference type="GO" id="GO:0006816">
    <property type="term" value="P:calcium ion transport"/>
    <property type="evidence" value="ECO:0000266"/>
    <property type="project" value="RGD"/>
</dbReference>
<dbReference type="GO" id="GO:1904646">
    <property type="term" value="P:cellular response to amyloid-beta"/>
    <property type="evidence" value="ECO:0000266"/>
    <property type="project" value="RGD"/>
</dbReference>
<dbReference type="GO" id="GO:0007268">
    <property type="term" value="P:chemical synaptic transmission"/>
    <property type="evidence" value="ECO:0000318"/>
    <property type="project" value="GO_Central"/>
</dbReference>
<dbReference type="GO" id="GO:0006612">
    <property type="term" value="P:protein targeting to membrane"/>
    <property type="evidence" value="ECO:0000266"/>
    <property type="project" value="RGD"/>
</dbReference>
<dbReference type="GO" id="GO:1902514">
    <property type="term" value="P:regulation of calcium ion transmembrane transport via high voltage-gated calcium channel"/>
    <property type="evidence" value="ECO:0000266"/>
    <property type="project" value="RGD"/>
</dbReference>
<dbReference type="FunFam" id="2.30.30.40:FF:000068">
    <property type="entry name" value="Voltage-dependent L-type calcium channel subunit beta-1 isoform 1"/>
    <property type="match status" value="1"/>
</dbReference>
<dbReference type="FunFam" id="3.40.50.300:FF:000432">
    <property type="entry name" value="Voltage-dependent L-type calcium channel subunit beta-1 isoform 1"/>
    <property type="match status" value="1"/>
</dbReference>
<dbReference type="Gene3D" id="3.40.50.300">
    <property type="entry name" value="P-loop containing nucleotide triphosphate hydrolases"/>
    <property type="match status" value="1"/>
</dbReference>
<dbReference type="Gene3D" id="2.30.30.40">
    <property type="entry name" value="SH3 Domains"/>
    <property type="match status" value="1"/>
</dbReference>
<dbReference type="InterPro" id="IPR046937">
    <property type="entry name" value="CAB1-4_N_A-dom"/>
</dbReference>
<dbReference type="InterPro" id="IPR008145">
    <property type="entry name" value="GK/Ca_channel_bsu"/>
</dbReference>
<dbReference type="InterPro" id="IPR027417">
    <property type="entry name" value="P-loop_NTPase"/>
</dbReference>
<dbReference type="InterPro" id="IPR036028">
    <property type="entry name" value="SH3-like_dom_sf"/>
</dbReference>
<dbReference type="InterPro" id="IPR001452">
    <property type="entry name" value="SH3_domain"/>
</dbReference>
<dbReference type="InterPro" id="IPR005443">
    <property type="entry name" value="VDCC_L_b1su"/>
</dbReference>
<dbReference type="InterPro" id="IPR000584">
    <property type="entry name" value="VDCC_L_bsu"/>
</dbReference>
<dbReference type="PANTHER" id="PTHR11824">
    <property type="entry name" value="VOLTAGE-DEPENDENT CALCIUM CHANNEL BETA SUBUNIT"/>
    <property type="match status" value="1"/>
</dbReference>
<dbReference type="Pfam" id="PF00625">
    <property type="entry name" value="Guanylate_kin"/>
    <property type="match status" value="1"/>
</dbReference>
<dbReference type="Pfam" id="PF12052">
    <property type="entry name" value="VGCC_beta4Aa_N"/>
    <property type="match status" value="1"/>
</dbReference>
<dbReference type="PRINTS" id="PR01626">
    <property type="entry name" value="LCACHANNELB"/>
</dbReference>
<dbReference type="PRINTS" id="PR01627">
    <property type="entry name" value="LCACHANNELB1"/>
</dbReference>
<dbReference type="SMART" id="SM00072">
    <property type="entry name" value="GuKc"/>
    <property type="match status" value="1"/>
</dbReference>
<dbReference type="SUPFAM" id="SSF52540">
    <property type="entry name" value="P-loop containing nucleoside triphosphate hydrolases"/>
    <property type="match status" value="1"/>
</dbReference>
<dbReference type="SUPFAM" id="SSF50044">
    <property type="entry name" value="SH3-domain"/>
    <property type="match status" value="1"/>
</dbReference>
<dbReference type="PROSITE" id="PS50002">
    <property type="entry name" value="SH3"/>
    <property type="match status" value="1"/>
</dbReference>
<proteinExistence type="evidence at protein level"/>
<organism>
    <name type="scientific">Rattus norvegicus</name>
    <name type="common">Rat</name>
    <dbReference type="NCBI Taxonomy" id="10116"/>
    <lineage>
        <taxon>Eukaryota</taxon>
        <taxon>Metazoa</taxon>
        <taxon>Chordata</taxon>
        <taxon>Craniata</taxon>
        <taxon>Vertebrata</taxon>
        <taxon>Euteleostomi</taxon>
        <taxon>Mammalia</taxon>
        <taxon>Eutheria</taxon>
        <taxon>Euarchontoglires</taxon>
        <taxon>Glires</taxon>
        <taxon>Rodentia</taxon>
        <taxon>Myomorpha</taxon>
        <taxon>Muroidea</taxon>
        <taxon>Muridae</taxon>
        <taxon>Murinae</taxon>
        <taxon>Rattus</taxon>
    </lineage>
</organism>
<accession>P54283</accession>